<keyword id="KW-1003">Cell membrane</keyword>
<keyword id="KW-0175">Coiled coil</keyword>
<keyword id="KW-0449">Lipoprotein</keyword>
<keyword id="KW-0472">Membrane</keyword>
<keyword id="KW-0564">Palmitate</keyword>
<keyword id="KW-1185">Reference proteome</keyword>
<organism>
    <name type="scientific">Arabidopsis thaliana</name>
    <name type="common">Mouse-ear cress</name>
    <dbReference type="NCBI Taxonomy" id="3702"/>
    <lineage>
        <taxon>Eukaryota</taxon>
        <taxon>Viridiplantae</taxon>
        <taxon>Streptophyta</taxon>
        <taxon>Embryophyta</taxon>
        <taxon>Tracheophyta</taxon>
        <taxon>Spermatophyta</taxon>
        <taxon>Magnoliopsida</taxon>
        <taxon>eudicotyledons</taxon>
        <taxon>Gunneridae</taxon>
        <taxon>Pentapetalae</taxon>
        <taxon>rosids</taxon>
        <taxon>malvids</taxon>
        <taxon>Brassicales</taxon>
        <taxon>Brassicaceae</taxon>
        <taxon>Camelineae</taxon>
        <taxon>Arabidopsis</taxon>
    </lineage>
</organism>
<protein>
    <recommendedName>
        <fullName>Flotillin-like protein 3</fullName>
    </recommendedName>
    <alternativeName>
        <fullName>Nodulin-like protein 3</fullName>
    </alternativeName>
</protein>
<name>FLOT3_ARATH</name>
<accession>Q9LV90</accession>
<accession>Q0WPP0</accession>
<accession>Q8LES6</accession>
<comment type="function">
    <text evidence="1">May act as a scaffolding protein within caveolar membranes, functionally participating in formation of caveolae or caveolae-like vesicles.</text>
</comment>
<comment type="subcellular location">
    <subcellularLocation>
        <location evidence="3">Cell membrane</location>
        <topology evidence="3">Lipid-anchor</topology>
    </subcellularLocation>
    <subcellularLocation>
        <location evidence="1">Membrane</location>
        <location evidence="1">Caveola</location>
    </subcellularLocation>
</comment>
<comment type="PTM">
    <text evidence="3">May be palmitoylated.</text>
</comment>
<comment type="similarity">
    <text evidence="3">Belongs to the band 7/mec-2 family. Flotillin subfamily.</text>
</comment>
<feature type="chain" id="PRO_0000395211" description="Flotillin-like protein 3">
    <location>
        <begin position="1"/>
        <end position="479"/>
    </location>
</feature>
<feature type="coiled-coil region" evidence="2">
    <location>
        <begin position="227"/>
        <end position="251"/>
    </location>
</feature>
<feature type="coiled-coil region" evidence="2">
    <location>
        <begin position="306"/>
        <end position="326"/>
    </location>
</feature>
<feature type="lipid moiety-binding region" description="S-palmitoyl cysteine" evidence="2">
    <location>
        <position position="36"/>
    </location>
</feature>
<feature type="sequence conflict" description="In Ref. 4; BAF00909." evidence="3" ref="4">
    <original>K</original>
    <variation>Q</variation>
    <location>
        <position position="7"/>
    </location>
</feature>
<feature type="sequence conflict" description="In Ref. 3; AAM62489." evidence="3" ref="3">
    <original>G</original>
    <variation>V</variation>
    <location>
        <position position="69"/>
    </location>
</feature>
<reference key="1">
    <citation type="journal article" date="2000" name="DNA Res.">
        <title>Structural analysis of Arabidopsis thaliana chromosome 5. X. Sequence features of the regions of 3,076,755 bp covered by sixty P1 and TAC clones.</title>
        <authorList>
            <person name="Sato S."/>
            <person name="Nakamura Y."/>
            <person name="Kaneko T."/>
            <person name="Katoh T."/>
            <person name="Asamizu E."/>
            <person name="Kotani H."/>
            <person name="Tabata S."/>
        </authorList>
    </citation>
    <scope>NUCLEOTIDE SEQUENCE [LARGE SCALE GENOMIC DNA]</scope>
    <source>
        <strain>cv. Columbia</strain>
    </source>
</reference>
<reference key="2">
    <citation type="journal article" date="2017" name="Plant J.">
        <title>Araport11: a complete reannotation of the Arabidopsis thaliana reference genome.</title>
        <authorList>
            <person name="Cheng C.Y."/>
            <person name="Krishnakumar V."/>
            <person name="Chan A.P."/>
            <person name="Thibaud-Nissen F."/>
            <person name="Schobel S."/>
            <person name="Town C.D."/>
        </authorList>
    </citation>
    <scope>GENOME REANNOTATION</scope>
    <source>
        <strain>cv. Columbia</strain>
    </source>
</reference>
<reference key="3">
    <citation type="submission" date="2002-03" db="EMBL/GenBank/DDBJ databases">
        <title>Full-length cDNA from Arabidopsis thaliana.</title>
        <authorList>
            <person name="Brover V.V."/>
            <person name="Troukhan M.E."/>
            <person name="Alexandrov N.A."/>
            <person name="Lu Y.-P."/>
            <person name="Flavell R.B."/>
            <person name="Feldmann K.A."/>
        </authorList>
    </citation>
    <scope>NUCLEOTIDE SEQUENCE [LARGE SCALE MRNA]</scope>
</reference>
<reference key="4">
    <citation type="submission" date="2006-07" db="EMBL/GenBank/DDBJ databases">
        <title>Large-scale analysis of RIKEN Arabidopsis full-length (RAFL) cDNAs.</title>
        <authorList>
            <person name="Totoki Y."/>
            <person name="Seki M."/>
            <person name="Ishida J."/>
            <person name="Nakajima M."/>
            <person name="Enju A."/>
            <person name="Kamiya A."/>
            <person name="Narusaka M."/>
            <person name="Shin-i T."/>
            <person name="Nakagawa M."/>
            <person name="Sakamoto N."/>
            <person name="Oishi K."/>
            <person name="Kohara Y."/>
            <person name="Kobayashi M."/>
            <person name="Toyoda A."/>
            <person name="Sakaki Y."/>
            <person name="Sakurai T."/>
            <person name="Iida K."/>
            <person name="Akiyama K."/>
            <person name="Satou M."/>
            <person name="Toyoda T."/>
            <person name="Konagaya A."/>
            <person name="Carninci P."/>
            <person name="Kawai J."/>
            <person name="Hayashizaki Y."/>
            <person name="Shinozaki K."/>
        </authorList>
    </citation>
    <scope>NUCLEOTIDE SEQUENCE [LARGE SCALE MRNA]</scope>
    <source>
        <strain>cv. Columbia</strain>
    </source>
</reference>
<reference key="5">
    <citation type="submission" date="2006-10" db="EMBL/GenBank/DDBJ databases">
        <title>Arabidopsis ORF Clones.</title>
        <authorList>
            <person name="Quinitio C."/>
            <person name="Chen H."/>
            <person name="Kim C.J."/>
            <person name="Shinn P."/>
            <person name="Ecker J.R."/>
        </authorList>
    </citation>
    <scope>NUCLEOTIDE SEQUENCE [LARGE SCALE MRNA]</scope>
    <source>
        <strain>cv. Columbia</strain>
    </source>
</reference>
<sequence length="479" mass="52833">MSYRVAKASQYLAITGGGITDIKLAKKSWVFPWQSCTVFDVSPVNYTFEVQAMSSEKLPFVIPAVFTIGPRVDDPHALLLYAMLMSQHDKHSNHVNELVQGVIEGETRVLVASMTMEEVFKGTKEFKKEVFDKVQLELNQFGLVIYNANVKQLVDVPGHEYFSYLGQKTQMEAANQAKIDVAEAKMKGEVGAKERTGLTIQNAAKIDAESKIISTQRLGEGTKEEIKVKTEVKVFQNEKEALVAKADAALAIQKAALSQNSRVAEVEAAKAVALREAELQTKVEKMNALTRTEKLKAEFLSKASVEYETKVQEANWELYNKQKQAEAVLYEKQKQAEATKAAADAAFYSKQKDAEGLVAMADAQGTYLKTLLGAVNNDYSAMRDFLMINNGIYQDIAKTNAVAIRDLQPKISVWNHGGAEQGMNGGGKATMNDIAGLYKMLPPVLDTVYEQTGMQPPAWIGTLRGAEPKQSLHAQQHRG</sequence>
<dbReference type="EMBL" id="AB019236">
    <property type="protein sequence ID" value="BAA97299.1"/>
    <property type="molecule type" value="Genomic_DNA"/>
</dbReference>
<dbReference type="EMBL" id="CP002688">
    <property type="protein sequence ID" value="AED97963.1"/>
    <property type="molecule type" value="Genomic_DNA"/>
</dbReference>
<dbReference type="EMBL" id="AY085257">
    <property type="protein sequence ID" value="AAM62489.1"/>
    <property type="molecule type" value="mRNA"/>
</dbReference>
<dbReference type="EMBL" id="AK229023">
    <property type="protein sequence ID" value="BAF00909.1"/>
    <property type="molecule type" value="mRNA"/>
</dbReference>
<dbReference type="EMBL" id="BT029217">
    <property type="protein sequence ID" value="ABJ17152.1"/>
    <property type="molecule type" value="mRNA"/>
</dbReference>
<dbReference type="RefSeq" id="NP_201292.1">
    <property type="nucleotide sequence ID" value="NM_125885.3"/>
</dbReference>
<dbReference type="SMR" id="Q9LV90"/>
<dbReference type="BioGRID" id="21852">
    <property type="interactions" value="7"/>
</dbReference>
<dbReference type="FunCoup" id="Q9LV90">
    <property type="interactions" value="72"/>
</dbReference>
<dbReference type="IntAct" id="Q9LV90">
    <property type="interactions" value="7"/>
</dbReference>
<dbReference type="STRING" id="3702.Q9LV90"/>
<dbReference type="iPTMnet" id="Q9LV90"/>
<dbReference type="PaxDb" id="3702-AT5G64870.1"/>
<dbReference type="ProteomicsDB" id="230033"/>
<dbReference type="EnsemblPlants" id="AT5G64870.1">
    <property type="protein sequence ID" value="AT5G64870.1"/>
    <property type="gene ID" value="AT5G64870"/>
</dbReference>
<dbReference type="GeneID" id="836610"/>
<dbReference type="Gramene" id="AT5G64870.1">
    <property type="protein sequence ID" value="AT5G64870.1"/>
    <property type="gene ID" value="AT5G64870"/>
</dbReference>
<dbReference type="KEGG" id="ath:AT5G64870"/>
<dbReference type="Araport" id="AT5G64870"/>
<dbReference type="TAIR" id="AT5G64870">
    <property type="gene designation" value="FLOT3"/>
</dbReference>
<dbReference type="eggNOG" id="KOG2668">
    <property type="taxonomic scope" value="Eukaryota"/>
</dbReference>
<dbReference type="HOGENOM" id="CLU_030844_1_1_1"/>
<dbReference type="InParanoid" id="Q9LV90"/>
<dbReference type="OMA" id="PAWMGSM"/>
<dbReference type="OrthoDB" id="6080404at2759"/>
<dbReference type="PhylomeDB" id="Q9LV90"/>
<dbReference type="PRO" id="PR:Q9LV90"/>
<dbReference type="Proteomes" id="UP000006548">
    <property type="component" value="Chromosome 5"/>
</dbReference>
<dbReference type="ExpressionAtlas" id="Q9LV90">
    <property type="expression patterns" value="baseline and differential"/>
</dbReference>
<dbReference type="GO" id="GO:0005901">
    <property type="term" value="C:caveola"/>
    <property type="evidence" value="ECO:0007669"/>
    <property type="project" value="UniProtKB-SubCell"/>
</dbReference>
<dbReference type="GO" id="GO:0000325">
    <property type="term" value="C:plant-type vacuole"/>
    <property type="evidence" value="ECO:0007005"/>
    <property type="project" value="TAIR"/>
</dbReference>
<dbReference type="GO" id="GO:0044853">
    <property type="term" value="C:plasma membrane raft"/>
    <property type="evidence" value="ECO:0000314"/>
    <property type="project" value="TAIR"/>
</dbReference>
<dbReference type="GO" id="GO:0009536">
    <property type="term" value="C:plastid"/>
    <property type="evidence" value="ECO:0007005"/>
    <property type="project" value="TAIR"/>
</dbReference>
<dbReference type="CDD" id="cd03399">
    <property type="entry name" value="SPFH_flotillin"/>
    <property type="match status" value="1"/>
</dbReference>
<dbReference type="FunFam" id="3.30.479.30:FF:000015">
    <property type="entry name" value="Flotillin-like protein 2"/>
    <property type="match status" value="1"/>
</dbReference>
<dbReference type="Gene3D" id="3.30.479.30">
    <property type="entry name" value="Band 7 domain"/>
    <property type="match status" value="1"/>
</dbReference>
<dbReference type="InterPro" id="IPR001107">
    <property type="entry name" value="Band_7"/>
</dbReference>
<dbReference type="InterPro" id="IPR036013">
    <property type="entry name" value="Band_7/SPFH_dom_sf"/>
</dbReference>
<dbReference type="InterPro" id="IPR027705">
    <property type="entry name" value="Flotillin_fam"/>
</dbReference>
<dbReference type="PANTHER" id="PTHR13806:SF38">
    <property type="entry name" value="FLOTILLIN-LIKE PROTEIN 3"/>
    <property type="match status" value="1"/>
</dbReference>
<dbReference type="PANTHER" id="PTHR13806">
    <property type="entry name" value="FLOTILLIN-RELATED"/>
    <property type="match status" value="1"/>
</dbReference>
<dbReference type="Pfam" id="PF01145">
    <property type="entry name" value="Band_7"/>
    <property type="match status" value="1"/>
</dbReference>
<dbReference type="SUPFAM" id="SSF117892">
    <property type="entry name" value="Band 7/SPFH domain"/>
    <property type="match status" value="1"/>
</dbReference>
<proteinExistence type="evidence at transcript level"/>
<gene>
    <name type="primary">FLOT3</name>
    <name type="ordered locus">At5g64870</name>
    <name type="ORF">MXK3.10</name>
</gene>
<evidence type="ECO:0000250" key="1"/>
<evidence type="ECO:0000255" key="2"/>
<evidence type="ECO:0000305" key="3"/>